<name>UVRB_CLOAB</name>
<proteinExistence type="inferred from homology"/>
<keyword id="KW-0067">ATP-binding</keyword>
<keyword id="KW-0963">Cytoplasm</keyword>
<keyword id="KW-0227">DNA damage</keyword>
<keyword id="KW-0228">DNA excision</keyword>
<keyword id="KW-0234">DNA repair</keyword>
<keyword id="KW-0267">Excision nuclease</keyword>
<keyword id="KW-0547">Nucleotide-binding</keyword>
<keyword id="KW-1185">Reference proteome</keyword>
<keyword id="KW-0742">SOS response</keyword>
<evidence type="ECO:0000255" key="1">
    <source>
        <dbReference type="HAMAP-Rule" id="MF_00204"/>
    </source>
</evidence>
<feature type="chain" id="PRO_0000138388" description="UvrABC system protein B">
    <location>
        <begin position="1"/>
        <end position="666"/>
    </location>
</feature>
<feature type="domain" description="Helicase ATP-binding" evidence="1">
    <location>
        <begin position="25"/>
        <end position="412"/>
    </location>
</feature>
<feature type="domain" description="Helicase C-terminal" evidence="1">
    <location>
        <begin position="429"/>
        <end position="595"/>
    </location>
</feature>
<feature type="domain" description="UVR" evidence="1">
    <location>
        <begin position="622"/>
        <end position="657"/>
    </location>
</feature>
<feature type="short sequence motif" description="Beta-hairpin">
    <location>
        <begin position="91"/>
        <end position="114"/>
    </location>
</feature>
<feature type="binding site" evidence="1">
    <location>
        <begin position="38"/>
        <end position="45"/>
    </location>
    <ligand>
        <name>ATP</name>
        <dbReference type="ChEBI" id="CHEBI:30616"/>
    </ligand>
</feature>
<dbReference type="EMBL" id="AE001437">
    <property type="protein sequence ID" value="AAK78482.1"/>
    <property type="molecule type" value="Genomic_DNA"/>
</dbReference>
<dbReference type="PIR" id="G96961">
    <property type="entry name" value="G96961"/>
</dbReference>
<dbReference type="RefSeq" id="NP_347142.1">
    <property type="nucleotide sequence ID" value="NC_003030.1"/>
</dbReference>
<dbReference type="RefSeq" id="WP_010963824.1">
    <property type="nucleotide sequence ID" value="NC_003030.1"/>
</dbReference>
<dbReference type="SMR" id="Q97LQ2"/>
<dbReference type="STRING" id="272562.CA_C0502"/>
<dbReference type="GeneID" id="44997011"/>
<dbReference type="KEGG" id="cac:CA_C0502"/>
<dbReference type="PATRIC" id="fig|272562.8.peg.701"/>
<dbReference type="eggNOG" id="COG0556">
    <property type="taxonomic scope" value="Bacteria"/>
</dbReference>
<dbReference type="HOGENOM" id="CLU_009621_2_1_9"/>
<dbReference type="OrthoDB" id="9806651at2"/>
<dbReference type="Proteomes" id="UP000000814">
    <property type="component" value="Chromosome"/>
</dbReference>
<dbReference type="GO" id="GO:0005737">
    <property type="term" value="C:cytoplasm"/>
    <property type="evidence" value="ECO:0007669"/>
    <property type="project" value="UniProtKB-SubCell"/>
</dbReference>
<dbReference type="GO" id="GO:0009380">
    <property type="term" value="C:excinuclease repair complex"/>
    <property type="evidence" value="ECO:0007669"/>
    <property type="project" value="InterPro"/>
</dbReference>
<dbReference type="GO" id="GO:0005524">
    <property type="term" value="F:ATP binding"/>
    <property type="evidence" value="ECO:0007669"/>
    <property type="project" value="UniProtKB-UniRule"/>
</dbReference>
<dbReference type="GO" id="GO:0016887">
    <property type="term" value="F:ATP hydrolysis activity"/>
    <property type="evidence" value="ECO:0007669"/>
    <property type="project" value="InterPro"/>
</dbReference>
<dbReference type="GO" id="GO:0003677">
    <property type="term" value="F:DNA binding"/>
    <property type="evidence" value="ECO:0007669"/>
    <property type="project" value="UniProtKB-UniRule"/>
</dbReference>
<dbReference type="GO" id="GO:0009381">
    <property type="term" value="F:excinuclease ABC activity"/>
    <property type="evidence" value="ECO:0007669"/>
    <property type="project" value="UniProtKB-UniRule"/>
</dbReference>
<dbReference type="GO" id="GO:0006289">
    <property type="term" value="P:nucleotide-excision repair"/>
    <property type="evidence" value="ECO:0007669"/>
    <property type="project" value="UniProtKB-UniRule"/>
</dbReference>
<dbReference type="GO" id="GO:0009432">
    <property type="term" value="P:SOS response"/>
    <property type="evidence" value="ECO:0007669"/>
    <property type="project" value="UniProtKB-UniRule"/>
</dbReference>
<dbReference type="CDD" id="cd17916">
    <property type="entry name" value="DEXHc_UvrB"/>
    <property type="match status" value="1"/>
</dbReference>
<dbReference type="CDD" id="cd18790">
    <property type="entry name" value="SF2_C_UvrB"/>
    <property type="match status" value="1"/>
</dbReference>
<dbReference type="Gene3D" id="3.40.50.300">
    <property type="entry name" value="P-loop containing nucleotide triphosphate hydrolases"/>
    <property type="match status" value="3"/>
</dbReference>
<dbReference type="Gene3D" id="4.10.860.10">
    <property type="entry name" value="UVR domain"/>
    <property type="match status" value="1"/>
</dbReference>
<dbReference type="HAMAP" id="MF_00204">
    <property type="entry name" value="UvrB"/>
    <property type="match status" value="1"/>
</dbReference>
<dbReference type="InterPro" id="IPR006935">
    <property type="entry name" value="Helicase/UvrB_N"/>
</dbReference>
<dbReference type="InterPro" id="IPR014001">
    <property type="entry name" value="Helicase_ATP-bd"/>
</dbReference>
<dbReference type="InterPro" id="IPR001650">
    <property type="entry name" value="Helicase_C-like"/>
</dbReference>
<dbReference type="InterPro" id="IPR027417">
    <property type="entry name" value="P-loop_NTPase"/>
</dbReference>
<dbReference type="InterPro" id="IPR001943">
    <property type="entry name" value="UVR_dom"/>
</dbReference>
<dbReference type="InterPro" id="IPR036876">
    <property type="entry name" value="UVR_dom_sf"/>
</dbReference>
<dbReference type="InterPro" id="IPR004807">
    <property type="entry name" value="UvrB"/>
</dbReference>
<dbReference type="InterPro" id="IPR041471">
    <property type="entry name" value="UvrB_inter"/>
</dbReference>
<dbReference type="InterPro" id="IPR024759">
    <property type="entry name" value="UvrB_YAD/RRR_dom"/>
</dbReference>
<dbReference type="NCBIfam" id="NF003673">
    <property type="entry name" value="PRK05298.1"/>
    <property type="match status" value="1"/>
</dbReference>
<dbReference type="NCBIfam" id="TIGR00631">
    <property type="entry name" value="uvrb"/>
    <property type="match status" value="1"/>
</dbReference>
<dbReference type="PANTHER" id="PTHR24029">
    <property type="entry name" value="UVRABC SYSTEM PROTEIN B"/>
    <property type="match status" value="1"/>
</dbReference>
<dbReference type="PANTHER" id="PTHR24029:SF0">
    <property type="entry name" value="UVRABC SYSTEM PROTEIN B"/>
    <property type="match status" value="1"/>
</dbReference>
<dbReference type="Pfam" id="PF00271">
    <property type="entry name" value="Helicase_C"/>
    <property type="match status" value="1"/>
</dbReference>
<dbReference type="Pfam" id="PF04851">
    <property type="entry name" value="ResIII"/>
    <property type="match status" value="1"/>
</dbReference>
<dbReference type="Pfam" id="PF02151">
    <property type="entry name" value="UVR"/>
    <property type="match status" value="1"/>
</dbReference>
<dbReference type="Pfam" id="PF12344">
    <property type="entry name" value="UvrB"/>
    <property type="match status" value="1"/>
</dbReference>
<dbReference type="Pfam" id="PF17757">
    <property type="entry name" value="UvrB_inter"/>
    <property type="match status" value="1"/>
</dbReference>
<dbReference type="SMART" id="SM00487">
    <property type="entry name" value="DEXDc"/>
    <property type="match status" value="1"/>
</dbReference>
<dbReference type="SMART" id="SM00490">
    <property type="entry name" value="HELICc"/>
    <property type="match status" value="1"/>
</dbReference>
<dbReference type="SUPFAM" id="SSF46600">
    <property type="entry name" value="C-terminal UvrC-binding domain of UvrB"/>
    <property type="match status" value="1"/>
</dbReference>
<dbReference type="SUPFAM" id="SSF52540">
    <property type="entry name" value="P-loop containing nucleoside triphosphate hydrolases"/>
    <property type="match status" value="2"/>
</dbReference>
<dbReference type="PROSITE" id="PS51192">
    <property type="entry name" value="HELICASE_ATP_BIND_1"/>
    <property type="match status" value="1"/>
</dbReference>
<dbReference type="PROSITE" id="PS51194">
    <property type="entry name" value="HELICASE_CTER"/>
    <property type="match status" value="1"/>
</dbReference>
<dbReference type="PROSITE" id="PS50151">
    <property type="entry name" value="UVR"/>
    <property type="match status" value="1"/>
</dbReference>
<sequence>MGTFKINSAFKPTGDQPQAIASIVNGIKNNNKWQTLLGVTGSGKTFTMANIIEKVQKPTLVIAHNKTLAAQLCSEFRDFFPDSSVEYFVSYYDYYQPEAYVAQTDTYIEKDASINDEIDKLRHSATSALFERRDVIVVASVSCIYGLGNPEEYKKLSISLRTGMNKDRDEILEKLVEMQYERNEINFVRGTFKVKGDTIDIFPAGSTSSAIRVELFGDEIDKIKEFDVLTGNTIKTLKHTVIFPASHFATSSDKIEEAIKQIEIELEERLRELNSEDKLLEAQRLKQRTNFDIEMMREVGYCTGIENYSRIMDGRQKGEPPKTLIDYFPDDFLMFIDESHVTLPQVKAMYGGDRSRKNSLVDYGFRLPSAYDNRPLKFDEFEEKINQIVFVSATPSNYELDHSENIAEQVIRPTGLLDPEIEVRPTKGQIDDLYSEIKNTIQNGFRILVTTLTKKMAEDLTDYLKDLGIKTTYMHSDIDTLERMKIIKDVRTGEFDVLVGINLLREGLDIPEVALVAILDADKEGFLRSERSLIQTIGRAARNSESRVIMYGDKITDAMGKAISETKRRRKIQIEYNEKNGIKPTTIKKAVRDVIGISEVAEGKTEYKSMDEAVKADNKNIDKLIKEFEKEMKEAAKELQFEKAAYFRDKVNELKKKLNENEEVIK</sequence>
<protein>
    <recommendedName>
        <fullName evidence="1">UvrABC system protein B</fullName>
        <shortName evidence="1">Protein UvrB</shortName>
    </recommendedName>
    <alternativeName>
        <fullName evidence="1">Excinuclease ABC subunit B</fullName>
    </alternativeName>
</protein>
<comment type="function">
    <text evidence="1">The UvrABC repair system catalyzes the recognition and processing of DNA lesions. A damage recognition complex composed of 2 UvrA and 2 UvrB subunits scans DNA for abnormalities. Upon binding of the UvrA(2)B(2) complex to a putative damaged site, the DNA wraps around one UvrB monomer. DNA wrap is dependent on ATP binding by UvrB and probably causes local melting of the DNA helix, facilitating insertion of UvrB beta-hairpin between the DNA strands. Then UvrB probes one DNA strand for the presence of a lesion. If a lesion is found the UvrA subunits dissociate and the UvrB-DNA preincision complex is formed. This complex is subsequently bound by UvrC and the second UvrB is released. If no lesion is found, the DNA wraps around the other UvrB subunit that will check the other stand for damage.</text>
</comment>
<comment type="subunit">
    <text evidence="1">Forms a heterotetramer with UvrA during the search for lesions. Interacts with UvrC in an incision complex.</text>
</comment>
<comment type="subcellular location">
    <subcellularLocation>
        <location evidence="1">Cytoplasm</location>
    </subcellularLocation>
</comment>
<comment type="domain">
    <text evidence="1">The beta-hairpin motif is involved in DNA binding.</text>
</comment>
<comment type="similarity">
    <text evidence="1">Belongs to the UvrB family.</text>
</comment>
<reference key="1">
    <citation type="journal article" date="2001" name="J. Bacteriol.">
        <title>Genome sequence and comparative analysis of the solvent-producing bacterium Clostridium acetobutylicum.</title>
        <authorList>
            <person name="Noelling J."/>
            <person name="Breton G."/>
            <person name="Omelchenko M.V."/>
            <person name="Makarova K.S."/>
            <person name="Zeng Q."/>
            <person name="Gibson R."/>
            <person name="Lee H.M."/>
            <person name="Dubois J."/>
            <person name="Qiu D."/>
            <person name="Hitti J."/>
            <person name="Wolf Y.I."/>
            <person name="Tatusov R.L."/>
            <person name="Sabathe F."/>
            <person name="Doucette-Stamm L.A."/>
            <person name="Soucaille P."/>
            <person name="Daly M.J."/>
            <person name="Bennett G.N."/>
            <person name="Koonin E.V."/>
            <person name="Smith D.R."/>
        </authorList>
    </citation>
    <scope>NUCLEOTIDE SEQUENCE [LARGE SCALE GENOMIC DNA]</scope>
    <source>
        <strain>ATCC 824 / DSM 792 / JCM 1419 / IAM 19013 / LMG 5710 / NBRC 13948 / NRRL B-527 / VKM B-1787 / 2291 / W</strain>
    </source>
</reference>
<organism>
    <name type="scientific">Clostridium acetobutylicum (strain ATCC 824 / DSM 792 / JCM 1419 / IAM 19013 / LMG 5710 / NBRC 13948 / NRRL B-527 / VKM B-1787 / 2291 / W)</name>
    <dbReference type="NCBI Taxonomy" id="272562"/>
    <lineage>
        <taxon>Bacteria</taxon>
        <taxon>Bacillati</taxon>
        <taxon>Bacillota</taxon>
        <taxon>Clostridia</taxon>
        <taxon>Eubacteriales</taxon>
        <taxon>Clostridiaceae</taxon>
        <taxon>Clostridium</taxon>
    </lineage>
</organism>
<gene>
    <name evidence="1" type="primary">uvrB</name>
    <name type="ordered locus">CA_C0502</name>
</gene>
<accession>Q97LQ2</accession>